<sequence length="645" mass="72274">MVLAMASQDVQNFFQPFSSWISRVYEALQQAGDMLSASLVNISKQDSKLSDKLDQDLDNIQIQETYFEDEEQDNDWSQEDANSLFLEVDHFSCCNSDLQDSAQNSSPSLSQHAKDSCSTMSQWPNWASDDRKLPHVLSSIAEEEHHLEKQRSGLQHGFDSQLPGTLETVNGKKQVNSFGDDEELSTSSDSDEEVIKQFEISVSRSQSFRSVTSEKGKQTGLEQKPKFSRSLLTHGEDGTEVSACEDLDGASQRRYSENLSYGEDDHIPAHSQSPCERGDAKHHGTSHQESSVVQSLRRQSTEGSLEMETAFNSRGFEDSYATDSSSMWSPEEQDRTNLQVPSGVSEPISKCGDLDVIFEYRAASQKLTVTIVRAQGLPDKDRSGVNSWQVHVVLLPGKKHRGRTNIQRGPNPVFREKVTFAKLEPRDVAACAVRFRLYAARKMTRERMMGEKLFYLSHLHPEGEMKVTLVLEPRSNISSGGSPLSPSAVSHSDSTSSTQSLSHGGAPELLVGLSYNATTGRLSVEMIKGSHFRNLAVNRAPDTYGKLFLLNSVGQEMSRCKTSIRRGQPNPVYKETFVFQVALFQLSDVTLMISVYNRRTMKRKEMIGWIALGQNSSGEEEQDHWEEMKETKGQQICRWHTLLES</sequence>
<gene>
    <name type="primary">SYT16</name>
    <name type="synonym">STREP14</name>
    <name type="synonym">SYT14L</name>
    <name type="synonym">SYT14R</name>
</gene>
<proteinExistence type="evidence at protein level"/>
<accession>Q17RD7</accession>
<accession>B4DZH2</accession>
<accession>B7ZL60</accession>
<accession>C9J8I3</accession>
<accession>Q707N2</accession>
<accession>Q7Z441</accession>
<accession>Q8IUU0</accession>
<accession>Q9BQR8</accession>
<feature type="chain" id="PRO_0000258584" description="Synaptotagmin-16">
    <location>
        <begin position="1"/>
        <end position="645"/>
    </location>
</feature>
<feature type="domain" description="C2 1" evidence="2">
    <location>
        <begin position="350"/>
        <end position="469"/>
    </location>
</feature>
<feature type="domain" description="C2 2" evidence="2">
    <location>
        <begin position="505"/>
        <end position="640"/>
    </location>
</feature>
<feature type="region of interest" description="Disordered" evidence="3">
    <location>
        <begin position="102"/>
        <end position="121"/>
    </location>
</feature>
<feature type="region of interest" description="Disordered" evidence="3">
    <location>
        <begin position="144"/>
        <end position="192"/>
    </location>
</feature>
<feature type="region of interest" description="Disordered" evidence="3">
    <location>
        <begin position="206"/>
        <end position="344"/>
    </location>
</feature>
<feature type="region of interest" description="Disordered" evidence="3">
    <location>
        <begin position="478"/>
        <end position="503"/>
    </location>
</feature>
<feature type="compositionally biased region" description="Polar residues" evidence="3">
    <location>
        <begin position="167"/>
        <end position="177"/>
    </location>
</feature>
<feature type="compositionally biased region" description="Acidic residues" evidence="3">
    <location>
        <begin position="179"/>
        <end position="192"/>
    </location>
</feature>
<feature type="compositionally biased region" description="Polar residues" evidence="3">
    <location>
        <begin position="287"/>
        <end position="303"/>
    </location>
</feature>
<feature type="compositionally biased region" description="Low complexity" evidence="3">
    <location>
        <begin position="485"/>
        <end position="502"/>
    </location>
</feature>
<feature type="splice variant" id="VSP_021378" description="In isoform 3." evidence="9">
    <location>
        <begin position="1"/>
        <end position="442"/>
    </location>
</feature>
<feature type="splice variant" id="VSP_021379" description="In isoform 2." evidence="7">
    <location>
        <begin position="312"/>
        <end position="331"/>
    </location>
</feature>
<feature type="splice variant" id="VSP_057225" description="In isoform 4." evidence="8">
    <original>EQDRTNLQVPSGVSEPISKCGDLDVIFEYRAASQKLTVTIVRAQGLPDKDRS</original>
    <variation>ANLNLKRKGYLLDVYCLSSPLLFTTSLHRRNRTGPICRCHPGSQSPSQSVVT</variation>
    <location>
        <begin position="332"/>
        <end position="383"/>
    </location>
</feature>
<feature type="splice variant" id="VSP_057226" description="In isoform 4." evidence="8">
    <location>
        <begin position="384"/>
        <end position="645"/>
    </location>
</feature>
<feature type="sequence variant" id="VAR_028930" description="In dbSNP:rs8019076." evidence="6">
    <original>V</original>
    <variation>A</variation>
    <location>
        <position position="10"/>
    </location>
</feature>
<feature type="sequence variant" id="VAR_028931" description="In dbSNP:rs17099370." evidence="5">
    <original>R</original>
    <variation>L</variation>
    <location>
        <position position="131"/>
    </location>
</feature>
<feature type="sequence conflict" description="In Ref. 1; BAC76810." evidence="10" ref="1">
    <original>V</original>
    <variation>I</variation>
    <location>
        <position position="175"/>
    </location>
</feature>
<feature type="sequence conflict" description="In Ref. 2; CAE85114." evidence="10" ref="2">
    <original>A</original>
    <variation>V</variation>
    <location>
        <position position="517"/>
    </location>
</feature>
<feature type="sequence conflict" description="In Ref. 2; CAE85114." evidence="10" ref="2">
    <original>Q</original>
    <variation>L</variation>
    <location>
        <position position="614"/>
    </location>
</feature>
<reference key="1">
    <citation type="journal article" date="2003" name="J. Biochem.">
        <title>Molecular cloning, expression, and characterization of a novel class of synaptotagmin (Syt XIV) conserved from Drosophila to humans.</title>
        <authorList>
            <person name="Fukuda M."/>
        </authorList>
    </citation>
    <scope>NUCLEOTIDE SEQUENCE [MRNA] (ISOFORM 2)</scope>
</reference>
<reference key="2">
    <citation type="journal article" date="2004" name="BMC Genomics">
        <title>Synaptotagmin gene content of the sequenced genomes.</title>
        <authorList>
            <person name="Craxton M.A."/>
        </authorList>
    </citation>
    <scope>NUCLEOTIDE SEQUENCE [MRNA] (ISOFORM 1)</scope>
    <scope>VARIANT LEU-131</scope>
</reference>
<reference key="3">
    <citation type="journal article" date="2004" name="Nat. Genet.">
        <title>Complete sequencing and characterization of 21,243 full-length human cDNAs.</title>
        <authorList>
            <person name="Ota T."/>
            <person name="Suzuki Y."/>
            <person name="Nishikawa T."/>
            <person name="Otsuki T."/>
            <person name="Sugiyama T."/>
            <person name="Irie R."/>
            <person name="Wakamatsu A."/>
            <person name="Hayashi K."/>
            <person name="Sato H."/>
            <person name="Nagai K."/>
            <person name="Kimura K."/>
            <person name="Makita H."/>
            <person name="Sekine M."/>
            <person name="Obayashi M."/>
            <person name="Nishi T."/>
            <person name="Shibahara T."/>
            <person name="Tanaka T."/>
            <person name="Ishii S."/>
            <person name="Yamamoto J."/>
            <person name="Saito K."/>
            <person name="Kawai Y."/>
            <person name="Isono Y."/>
            <person name="Nakamura Y."/>
            <person name="Nagahari K."/>
            <person name="Murakami K."/>
            <person name="Yasuda T."/>
            <person name="Iwayanagi T."/>
            <person name="Wagatsuma M."/>
            <person name="Shiratori A."/>
            <person name="Sudo H."/>
            <person name="Hosoiri T."/>
            <person name="Kaku Y."/>
            <person name="Kodaira H."/>
            <person name="Kondo H."/>
            <person name="Sugawara M."/>
            <person name="Takahashi M."/>
            <person name="Kanda K."/>
            <person name="Yokoi T."/>
            <person name="Furuya T."/>
            <person name="Kikkawa E."/>
            <person name="Omura Y."/>
            <person name="Abe K."/>
            <person name="Kamihara K."/>
            <person name="Katsuta N."/>
            <person name="Sato K."/>
            <person name="Tanikawa M."/>
            <person name="Yamazaki M."/>
            <person name="Ninomiya K."/>
            <person name="Ishibashi T."/>
            <person name="Yamashita H."/>
            <person name="Murakawa K."/>
            <person name="Fujimori K."/>
            <person name="Tanai H."/>
            <person name="Kimata M."/>
            <person name="Watanabe M."/>
            <person name="Hiraoka S."/>
            <person name="Chiba Y."/>
            <person name="Ishida S."/>
            <person name="Ono Y."/>
            <person name="Takiguchi S."/>
            <person name="Watanabe S."/>
            <person name="Yosida M."/>
            <person name="Hotuta T."/>
            <person name="Kusano J."/>
            <person name="Kanehori K."/>
            <person name="Takahashi-Fujii A."/>
            <person name="Hara H."/>
            <person name="Tanase T.-O."/>
            <person name="Nomura Y."/>
            <person name="Togiya S."/>
            <person name="Komai F."/>
            <person name="Hara R."/>
            <person name="Takeuchi K."/>
            <person name="Arita M."/>
            <person name="Imose N."/>
            <person name="Musashino K."/>
            <person name="Yuuki H."/>
            <person name="Oshima A."/>
            <person name="Sasaki N."/>
            <person name="Aotsuka S."/>
            <person name="Yoshikawa Y."/>
            <person name="Matsunawa H."/>
            <person name="Ichihara T."/>
            <person name="Shiohata N."/>
            <person name="Sano S."/>
            <person name="Moriya S."/>
            <person name="Momiyama H."/>
            <person name="Satoh N."/>
            <person name="Takami S."/>
            <person name="Terashima Y."/>
            <person name="Suzuki O."/>
            <person name="Nakagawa S."/>
            <person name="Senoh A."/>
            <person name="Mizoguchi H."/>
            <person name="Goto Y."/>
            <person name="Shimizu F."/>
            <person name="Wakebe H."/>
            <person name="Hishigaki H."/>
            <person name="Watanabe T."/>
            <person name="Sugiyama A."/>
            <person name="Takemoto M."/>
            <person name="Kawakami B."/>
            <person name="Yamazaki M."/>
            <person name="Watanabe K."/>
            <person name="Kumagai A."/>
            <person name="Itakura S."/>
            <person name="Fukuzumi Y."/>
            <person name="Fujimori Y."/>
            <person name="Komiyama M."/>
            <person name="Tashiro H."/>
            <person name="Tanigami A."/>
            <person name="Fujiwara T."/>
            <person name="Ono T."/>
            <person name="Yamada K."/>
            <person name="Fujii Y."/>
            <person name="Ozaki K."/>
            <person name="Hirao M."/>
            <person name="Ohmori Y."/>
            <person name="Kawabata A."/>
            <person name="Hikiji T."/>
            <person name="Kobatake N."/>
            <person name="Inagaki H."/>
            <person name="Ikema Y."/>
            <person name="Okamoto S."/>
            <person name="Okitani R."/>
            <person name="Kawakami T."/>
            <person name="Noguchi S."/>
            <person name="Itoh T."/>
            <person name="Shigeta K."/>
            <person name="Senba T."/>
            <person name="Matsumura K."/>
            <person name="Nakajima Y."/>
            <person name="Mizuno T."/>
            <person name="Morinaga M."/>
            <person name="Sasaki M."/>
            <person name="Togashi T."/>
            <person name="Oyama M."/>
            <person name="Hata H."/>
            <person name="Watanabe M."/>
            <person name="Komatsu T."/>
            <person name="Mizushima-Sugano J."/>
            <person name="Satoh T."/>
            <person name="Shirai Y."/>
            <person name="Takahashi Y."/>
            <person name="Nakagawa K."/>
            <person name="Okumura K."/>
            <person name="Nagase T."/>
            <person name="Nomura N."/>
            <person name="Kikuchi H."/>
            <person name="Masuho Y."/>
            <person name="Yamashita R."/>
            <person name="Nakai K."/>
            <person name="Yada T."/>
            <person name="Nakamura Y."/>
            <person name="Ohara O."/>
            <person name="Isogai T."/>
            <person name="Sugano S."/>
        </authorList>
    </citation>
    <scope>NUCLEOTIDE SEQUENCE [LARGE SCALE MRNA] (ISOFORM 4)</scope>
    <source>
        <tissue>Testis</tissue>
    </source>
</reference>
<reference key="4">
    <citation type="journal article" date="2003" name="Nature">
        <title>The DNA sequence and analysis of human chromosome 14.</title>
        <authorList>
            <person name="Heilig R."/>
            <person name="Eckenberg R."/>
            <person name="Petit J.-L."/>
            <person name="Fonknechten N."/>
            <person name="Da Silva C."/>
            <person name="Cattolico L."/>
            <person name="Levy M."/>
            <person name="Barbe V."/>
            <person name="De Berardinis V."/>
            <person name="Ureta-Vidal A."/>
            <person name="Pelletier E."/>
            <person name="Vico V."/>
            <person name="Anthouard V."/>
            <person name="Rowen L."/>
            <person name="Madan A."/>
            <person name="Qin S."/>
            <person name="Sun H."/>
            <person name="Du H."/>
            <person name="Pepin K."/>
            <person name="Artiguenave F."/>
            <person name="Robert C."/>
            <person name="Cruaud C."/>
            <person name="Bruels T."/>
            <person name="Jaillon O."/>
            <person name="Friedlander L."/>
            <person name="Samson G."/>
            <person name="Brottier P."/>
            <person name="Cure S."/>
            <person name="Segurens B."/>
            <person name="Aniere F."/>
            <person name="Samain S."/>
            <person name="Crespeau H."/>
            <person name="Abbasi N."/>
            <person name="Aiach N."/>
            <person name="Boscus D."/>
            <person name="Dickhoff R."/>
            <person name="Dors M."/>
            <person name="Dubois I."/>
            <person name="Friedman C."/>
            <person name="Gouyvenoux M."/>
            <person name="James R."/>
            <person name="Madan A."/>
            <person name="Mairey-Estrada B."/>
            <person name="Mangenot S."/>
            <person name="Martins N."/>
            <person name="Menard M."/>
            <person name="Oztas S."/>
            <person name="Ratcliffe A."/>
            <person name="Shaffer T."/>
            <person name="Trask B."/>
            <person name="Vacherie B."/>
            <person name="Bellemere C."/>
            <person name="Belser C."/>
            <person name="Besnard-Gonnet M."/>
            <person name="Bartol-Mavel D."/>
            <person name="Boutard M."/>
            <person name="Briez-Silla S."/>
            <person name="Combette S."/>
            <person name="Dufosse-Laurent V."/>
            <person name="Ferron C."/>
            <person name="Lechaplais C."/>
            <person name="Louesse C."/>
            <person name="Muselet D."/>
            <person name="Magdelenat G."/>
            <person name="Pateau E."/>
            <person name="Petit E."/>
            <person name="Sirvain-Trukniewicz P."/>
            <person name="Trybou A."/>
            <person name="Vega-Czarny N."/>
            <person name="Bataille E."/>
            <person name="Bluet E."/>
            <person name="Bordelais I."/>
            <person name="Dubois M."/>
            <person name="Dumont C."/>
            <person name="Guerin T."/>
            <person name="Haffray S."/>
            <person name="Hammadi R."/>
            <person name="Muanga J."/>
            <person name="Pellouin V."/>
            <person name="Robert D."/>
            <person name="Wunderle E."/>
            <person name="Gauguet G."/>
            <person name="Roy A."/>
            <person name="Sainte-Marthe L."/>
            <person name="Verdier J."/>
            <person name="Verdier-Discala C."/>
            <person name="Hillier L.W."/>
            <person name="Fulton L."/>
            <person name="McPherson J."/>
            <person name="Matsuda F."/>
            <person name="Wilson R."/>
            <person name="Scarpelli C."/>
            <person name="Gyapay G."/>
            <person name="Wincker P."/>
            <person name="Saurin W."/>
            <person name="Quetier F."/>
            <person name="Waterston R."/>
            <person name="Hood L."/>
            <person name="Weissenbach J."/>
        </authorList>
    </citation>
    <scope>NUCLEOTIDE SEQUENCE [LARGE SCALE GENOMIC DNA]</scope>
</reference>
<reference key="5">
    <citation type="journal article" date="2004" name="Genome Res.">
        <title>The status, quality, and expansion of the NIH full-length cDNA project: the Mammalian Gene Collection (MGC).</title>
        <authorList>
            <consortium name="The MGC Project Team"/>
        </authorList>
    </citation>
    <scope>NUCLEOTIDE SEQUENCE [LARGE SCALE MRNA] (ISOFORMS 1 AND 3)</scope>
    <scope>VARIANT ALA-10</scope>
    <source>
        <tissue>Brain cortex</tissue>
    </source>
</reference>
<reference key="6">
    <citation type="journal article" date="2001" name="Genomics">
        <title>Genomic analysis of synaptotagmin genes.</title>
        <authorList>
            <person name="Craxton M.A."/>
        </authorList>
    </citation>
    <scope>NUCLEOTIDE SEQUENCE [MRNA] OF 551-645</scope>
    <scope>TISSUE SPECIFICITY</scope>
    <source>
        <tissue>Brain</tissue>
    </source>
</reference>
<organism>
    <name type="scientific">Homo sapiens</name>
    <name type="common">Human</name>
    <dbReference type="NCBI Taxonomy" id="9606"/>
    <lineage>
        <taxon>Eukaryota</taxon>
        <taxon>Metazoa</taxon>
        <taxon>Chordata</taxon>
        <taxon>Craniata</taxon>
        <taxon>Vertebrata</taxon>
        <taxon>Euteleostomi</taxon>
        <taxon>Mammalia</taxon>
        <taxon>Eutheria</taxon>
        <taxon>Euarchontoglires</taxon>
        <taxon>Primates</taxon>
        <taxon>Haplorrhini</taxon>
        <taxon>Catarrhini</taxon>
        <taxon>Hominidae</taxon>
        <taxon>Homo</taxon>
    </lineage>
</organism>
<comment type="function">
    <text>May be involved in the trafficking and exocytosis of secretory vesicles in non-neuronal tissues. Is Ca(2+)-independent.</text>
</comment>
<comment type="subunit">
    <text evidence="1">Homodimer. Can also form heterodimers (By similarity).</text>
</comment>
<comment type="interaction">
    <interactant intactId="EBI-10238936">
        <id>Q17RD7</id>
    </interactant>
    <interactant intactId="EBI-741181">
        <id>Q6RW13</id>
        <label>AGTRAP</label>
    </interactant>
    <organismsDiffer>false</organismsDiffer>
    <experiments>5</experiments>
</comment>
<comment type="interaction">
    <interactant intactId="EBI-10238936">
        <id>Q17RD7</id>
    </interactant>
    <interactant intactId="EBI-11522760">
        <id>Q6RW13-2</id>
        <label>AGTRAP</label>
    </interactant>
    <organismsDiffer>false</organismsDiffer>
    <experiments>3</experiments>
</comment>
<comment type="interaction">
    <interactant intactId="EBI-10238936">
        <id>Q17RD7</id>
    </interactant>
    <interactant intactId="EBI-1220105">
        <id>P02654</id>
        <label>APOC1</label>
    </interactant>
    <organismsDiffer>false</organismsDiffer>
    <experiments>3</experiments>
</comment>
<comment type="interaction">
    <interactant intactId="EBI-10238936">
        <id>Q17RD7</id>
    </interactant>
    <interactant intactId="EBI-18302142">
        <id>P55056</id>
        <label>APOC4</label>
    </interactant>
    <organismsDiffer>false</organismsDiffer>
    <experiments>3</experiments>
</comment>
<comment type="interaction">
    <interactant intactId="EBI-10238936">
        <id>Q17RD7</id>
    </interactant>
    <interactant intactId="EBI-13381098">
        <id>Q8IYJ2-2</id>
        <label>C10orf67</label>
    </interactant>
    <organismsDiffer>false</organismsDiffer>
    <experiments>3</experiments>
</comment>
<comment type="interaction">
    <interactant intactId="EBI-10238936">
        <id>Q17RD7</id>
    </interactant>
    <interactant intactId="EBI-11522780">
        <id>Q96DZ9-2</id>
        <label>CMTM5</label>
    </interactant>
    <organismsDiffer>false</organismsDiffer>
    <experiments>3</experiments>
</comment>
<comment type="interaction">
    <interactant intactId="EBI-10238936">
        <id>Q17RD7</id>
    </interactant>
    <interactant intactId="EBI-12867082">
        <id>Q9H1C7</id>
        <label>CYSTM1</label>
    </interactant>
    <organismsDiffer>false</organismsDiffer>
    <experiments>3</experiments>
</comment>
<comment type="interaction">
    <interactant intactId="EBI-10238936">
        <id>Q17RD7</id>
    </interactant>
    <interactant intactId="EBI-12831318">
        <id>Q96Q80</id>
        <label>DERL3</label>
    </interactant>
    <organismsDiffer>false</organismsDiffer>
    <experiments>3</experiments>
</comment>
<comment type="interaction">
    <interactant intactId="EBI-10238936">
        <id>Q17RD7</id>
    </interactant>
    <interactant intactId="EBI-12836320">
        <id>Q92915-2</id>
        <label>FGF14</label>
    </interactant>
    <organismsDiffer>false</organismsDiffer>
    <experiments>3</experiments>
</comment>
<comment type="interaction">
    <interactant intactId="EBI-10238936">
        <id>Q17RD7</id>
    </interactant>
    <interactant intactId="EBI-12951679">
        <id>Q2KHT4-3</id>
        <label>GSG1</label>
    </interactant>
    <organismsDiffer>false</organismsDiffer>
    <experiments>3</experiments>
</comment>
<comment type="interaction">
    <interactant intactId="EBI-10238936">
        <id>Q17RD7</id>
    </interactant>
    <interactant intactId="EBI-12809676">
        <id>A8MV81</id>
        <label>HIGD1C</label>
    </interactant>
    <organismsDiffer>false</organismsDiffer>
    <experiments>3</experiments>
</comment>
<comment type="interaction">
    <interactant intactId="EBI-10238936">
        <id>Q17RD7</id>
    </interactant>
    <interactant intactId="EBI-21591415">
        <id>P13473-2</id>
        <label>LAMP2</label>
    </interactant>
    <organismsDiffer>false</organismsDiffer>
    <experiments>3</experiments>
</comment>
<comment type="interaction">
    <interactant intactId="EBI-10238936">
        <id>Q17RD7</id>
    </interactant>
    <interactant intactId="EBI-7055862">
        <id>Q96B96</id>
        <label>LDAF1</label>
    </interactant>
    <organismsDiffer>false</organismsDiffer>
    <experiments>3</experiments>
</comment>
<comment type="interaction">
    <interactant intactId="EBI-10238936">
        <id>Q17RD7</id>
    </interactant>
    <interactant intactId="EBI-719403">
        <id>O95563</id>
        <label>MPC2</label>
    </interactant>
    <organismsDiffer>false</organismsDiffer>
    <experiments>3</experiments>
</comment>
<comment type="interaction">
    <interactant intactId="EBI-10238936">
        <id>Q17RD7</id>
    </interactant>
    <interactant intactId="EBI-724207">
        <id>Q15390</id>
        <label>MTFR1</label>
    </interactant>
    <organismsDiffer>false</organismsDiffer>
    <experiments>3</experiments>
</comment>
<comment type="interaction">
    <interactant intactId="EBI-10238936">
        <id>Q17RD7</id>
    </interactant>
    <interactant intactId="EBI-713786">
        <id>Q8IXK0</id>
        <label>PHC2</label>
    </interactant>
    <organismsDiffer>false</organismsDiffer>
    <experiments>3</experiments>
</comment>
<comment type="interaction">
    <interactant intactId="EBI-10238936">
        <id>Q17RD7</id>
    </interactant>
    <interactant intactId="EBI-742388">
        <id>Q9H8W4</id>
        <label>PLEKHF2</label>
    </interactant>
    <organismsDiffer>false</organismsDiffer>
    <experiments>3</experiments>
</comment>
<comment type="interaction">
    <interactant intactId="EBI-10238936">
        <id>Q17RD7</id>
    </interactant>
    <interactant intactId="EBI-712367">
        <id>Q9UI14</id>
        <label>RABAC1</label>
    </interactant>
    <organismsDiffer>false</organismsDiffer>
    <experiments>8</experiments>
</comment>
<comment type="interaction">
    <interactant intactId="EBI-10238936">
        <id>Q17RD7</id>
    </interactant>
    <interactant intactId="EBI-14065960">
        <id>Q96HR9-2</id>
        <label>REEP6</label>
    </interactant>
    <organismsDiffer>false</organismsDiffer>
    <experiments>3</experiments>
</comment>
<comment type="interaction">
    <interactant intactId="EBI-10238936">
        <id>Q17RD7</id>
    </interactant>
    <interactant intactId="EBI-716910">
        <id>O15258</id>
        <label>RER1</label>
    </interactant>
    <organismsDiffer>false</organismsDiffer>
    <experiments>3</experiments>
</comment>
<comment type="interaction">
    <interactant intactId="EBI-10238936">
        <id>Q17RD7</id>
    </interactant>
    <interactant intactId="EBI-17589229">
        <id>Q6NTF9-3</id>
        <label>RHBDD2</label>
    </interactant>
    <organismsDiffer>false</organismsDiffer>
    <experiments>3</experiments>
</comment>
<comment type="interaction">
    <interactant intactId="EBI-10238936">
        <id>Q17RD7</id>
    </interactant>
    <interactant intactId="EBI-1052363">
        <id>Q9NS64</id>
        <label>RPRM</label>
    </interactant>
    <organismsDiffer>false</organismsDiffer>
    <experiments>3</experiments>
</comment>
<comment type="interaction">
    <interactant intactId="EBI-10238936">
        <id>Q17RD7</id>
    </interactant>
    <interactant intactId="EBI-715945">
        <id>Q9NQC3</id>
        <label>RTN4</label>
    </interactant>
    <organismsDiffer>false</organismsDiffer>
    <experiments>5</experiments>
</comment>
<comment type="interaction">
    <interactant intactId="EBI-10238936">
        <id>Q17RD7</id>
    </interactant>
    <interactant intactId="EBI-3923480">
        <id>Q8N3Y7</id>
        <label>SDR16C5</label>
    </interactant>
    <organismsDiffer>false</organismsDiffer>
    <experiments>3</experiments>
</comment>
<comment type="interaction">
    <interactant intactId="EBI-10238936">
        <id>Q17RD7</id>
    </interactant>
    <interactant intactId="EBI-2854842">
        <id>Q8WV19</id>
        <label>SFT2D1</label>
    </interactant>
    <organismsDiffer>false</organismsDiffer>
    <experiments>3</experiments>
</comment>
<comment type="interaction">
    <interactant intactId="EBI-10238936">
        <id>Q17RD7</id>
    </interactant>
    <interactant intactId="EBI-2623095">
        <id>Q9Y371</id>
        <label>SH3GLB1</label>
    </interactant>
    <organismsDiffer>false</organismsDiffer>
    <experiments>3</experiments>
</comment>
<comment type="interaction">
    <interactant intactId="EBI-10238936">
        <id>Q17RD7</id>
    </interactant>
    <interactant intactId="EBI-11528917">
        <id>Q8WW34-2</id>
        <label>TMEM239</label>
    </interactant>
    <organismsDiffer>false</organismsDiffer>
    <experiments>3</experiments>
</comment>
<comment type="interaction">
    <interactant intactId="EBI-10238936">
        <id>Q17RD7</id>
    </interactant>
    <interactant intactId="EBI-11343401">
        <id>Q9NYZ1</id>
        <label>TVP23B</label>
    </interactant>
    <organismsDiffer>false</organismsDiffer>
    <experiments>3</experiments>
</comment>
<comment type="interaction">
    <interactant intactId="EBI-10238936">
        <id>Q17RD7</id>
    </interactant>
    <interactant intactId="EBI-10176632">
        <id>O43829</id>
        <label>ZBTB14</label>
    </interactant>
    <organismsDiffer>false</organismsDiffer>
    <experiments>3</experiments>
</comment>
<comment type="interaction">
    <interactant intactId="EBI-25861603">
        <id>Q17RD7-3</id>
    </interactant>
    <interactant intactId="EBI-747754">
        <id>P28799</id>
        <label>GRN</label>
    </interactant>
    <organismsDiffer>false</organismsDiffer>
    <experiments>3</experiments>
</comment>
<comment type="interaction">
    <interactant intactId="EBI-25861603">
        <id>Q17RD7-3</id>
    </interactant>
    <interactant intactId="EBI-352682">
        <id>P04792</id>
        <label>HSPB1</label>
    </interactant>
    <organismsDiffer>false</organismsDiffer>
    <experiments>3</experiments>
</comment>
<comment type="interaction">
    <interactant intactId="EBI-25861603">
        <id>Q17RD7-3</id>
    </interactant>
    <interactant intactId="EBI-10975473">
        <id>O60333-2</id>
        <label>KIF1B</label>
    </interactant>
    <organismsDiffer>false</organismsDiffer>
    <experiments>3</experiments>
</comment>
<comment type="interaction">
    <interactant intactId="EBI-25861603">
        <id>Q17RD7-3</id>
    </interactant>
    <interactant intactId="EBI-396669">
        <id>Q9Y3C5</id>
        <label>RNF11</label>
    </interactant>
    <organismsDiffer>false</organismsDiffer>
    <experiments>3</experiments>
</comment>
<comment type="interaction">
    <interactant intactId="EBI-25861603">
        <id>Q17RD7-3</id>
    </interactant>
    <interactant intactId="EBI-720609">
        <id>O76024</id>
        <label>WFS1</label>
    </interactant>
    <organismsDiffer>false</organismsDiffer>
    <experiments>3</experiments>
</comment>
<comment type="alternative products">
    <event type="alternative splicing"/>
    <isoform>
        <id>Q17RD7-1</id>
        <name>1</name>
        <sequence type="displayed"/>
    </isoform>
    <isoform>
        <id>Q17RD7-2</id>
        <name>2</name>
        <sequence type="described" ref="VSP_021379"/>
    </isoform>
    <isoform>
        <id>Q17RD7-3</id>
        <name>3</name>
        <sequence type="described" ref="VSP_021378"/>
    </isoform>
    <isoform>
        <id>Q17RD7-4</id>
        <name>4</name>
        <sequence type="described" ref="VSP_057225 VSP_057226"/>
    </isoform>
</comment>
<comment type="tissue specificity">
    <text evidence="4">Expressed in brain.</text>
</comment>
<comment type="similarity">
    <text evidence="10">Belongs to the synaptotagmin family.</text>
</comment>
<comment type="sequence caution" evidence="10">
    <conflict type="erroneous termination">
        <sequence resource="EMBL-CDS" id="CAE85114"/>
    </conflict>
    <text>Truncated C-terminus.</text>
</comment>
<dbReference type="EMBL" id="AB102949">
    <property type="protein sequence ID" value="BAC76810.1"/>
    <property type="molecule type" value="mRNA"/>
</dbReference>
<dbReference type="EMBL" id="AJ617628">
    <property type="protein sequence ID" value="CAE85114.1"/>
    <property type="status" value="ALT_SEQ"/>
    <property type="molecule type" value="mRNA"/>
</dbReference>
<dbReference type="EMBL" id="AK302919">
    <property type="protein sequence ID" value="BAG64084.1"/>
    <property type="molecule type" value="mRNA"/>
</dbReference>
<dbReference type="EMBL" id="AL356018">
    <property type="status" value="NOT_ANNOTATED_CDS"/>
    <property type="molecule type" value="Genomic_DNA"/>
</dbReference>
<dbReference type="EMBL" id="AL390816">
    <property type="status" value="NOT_ANNOTATED_CDS"/>
    <property type="molecule type" value="Genomic_DNA"/>
</dbReference>
<dbReference type="EMBL" id="BC040924">
    <property type="protein sequence ID" value="AAH40924.1"/>
    <property type="molecule type" value="mRNA"/>
</dbReference>
<dbReference type="EMBL" id="BC117363">
    <property type="protein sequence ID" value="AAI17364.1"/>
    <property type="molecule type" value="mRNA"/>
</dbReference>
<dbReference type="EMBL" id="BC143598">
    <property type="protein sequence ID" value="AAI43599.1"/>
    <property type="molecule type" value="mRNA"/>
</dbReference>
<dbReference type="EMBL" id="AJ303367">
    <property type="protein sequence ID" value="CAC33889.1"/>
    <property type="molecule type" value="mRNA"/>
</dbReference>
<dbReference type="CCDS" id="CCDS45121.1">
    <molecule id="Q17RD7-1"/>
</dbReference>
<dbReference type="RefSeq" id="NP_001354585.1">
    <molecule id="Q17RD7-1"/>
    <property type="nucleotide sequence ID" value="NM_001367656.1"/>
</dbReference>
<dbReference type="RefSeq" id="NP_001354590.1">
    <molecule id="Q17RD7-1"/>
    <property type="nucleotide sequence ID" value="NM_001367661.1"/>
</dbReference>
<dbReference type="RefSeq" id="NP_001354592.1">
    <molecule id="Q17RD7-1"/>
    <property type="nucleotide sequence ID" value="NM_001367663.1"/>
</dbReference>
<dbReference type="RefSeq" id="NP_001374016.1">
    <molecule id="Q17RD7-1"/>
    <property type="nucleotide sequence ID" value="NM_001387087.1"/>
</dbReference>
<dbReference type="RefSeq" id="NP_114120.2">
    <property type="nucleotide sequence ID" value="NM_031914.2"/>
</dbReference>
<dbReference type="RefSeq" id="XP_006720335.1">
    <property type="nucleotide sequence ID" value="XM_006720272.3"/>
</dbReference>
<dbReference type="RefSeq" id="XP_011535521.1">
    <property type="nucleotide sequence ID" value="XM_011537219.1"/>
</dbReference>
<dbReference type="RefSeq" id="XP_016877182.1">
    <property type="nucleotide sequence ID" value="XM_017021693.1"/>
</dbReference>
<dbReference type="RefSeq" id="XP_016877183.1">
    <property type="nucleotide sequence ID" value="XM_017021694.1"/>
</dbReference>
<dbReference type="RefSeq" id="XP_016877184.1">
    <property type="nucleotide sequence ID" value="XM_017021695.1"/>
</dbReference>
<dbReference type="RefSeq" id="XP_047287758.1">
    <molecule id="Q17RD7-1"/>
    <property type="nucleotide sequence ID" value="XM_047431802.1"/>
</dbReference>
<dbReference type="RefSeq" id="XP_047287759.1">
    <molecule id="Q17RD7-1"/>
    <property type="nucleotide sequence ID" value="XM_047431803.1"/>
</dbReference>
<dbReference type="RefSeq" id="XP_054232771.1">
    <molecule id="Q17RD7-1"/>
    <property type="nucleotide sequence ID" value="XM_054376796.1"/>
</dbReference>
<dbReference type="RefSeq" id="XP_054232772.1">
    <molecule id="Q17RD7-1"/>
    <property type="nucleotide sequence ID" value="XM_054376797.1"/>
</dbReference>
<dbReference type="SMR" id="Q17RD7"/>
<dbReference type="BioGRID" id="123767">
    <property type="interactions" value="42"/>
</dbReference>
<dbReference type="FunCoup" id="Q17RD7">
    <property type="interactions" value="49"/>
</dbReference>
<dbReference type="IntAct" id="Q17RD7">
    <property type="interactions" value="47"/>
</dbReference>
<dbReference type="MINT" id="Q17RD7"/>
<dbReference type="STRING" id="9606.ENSP00000478637"/>
<dbReference type="GlyGen" id="Q17RD7">
    <property type="glycosylation" value="1 site, 1 O-linked glycan (1 site)"/>
</dbReference>
<dbReference type="iPTMnet" id="Q17RD7"/>
<dbReference type="PhosphoSitePlus" id="Q17RD7"/>
<dbReference type="BioMuta" id="SYT16"/>
<dbReference type="DMDM" id="313104017"/>
<dbReference type="jPOST" id="Q17RD7"/>
<dbReference type="MassIVE" id="Q17RD7"/>
<dbReference type="PaxDb" id="9606-ENSP00000478637"/>
<dbReference type="PeptideAtlas" id="Q17RD7"/>
<dbReference type="ProteomicsDB" id="5599"/>
<dbReference type="ProteomicsDB" id="61148">
    <molecule id="Q17RD7-1"/>
</dbReference>
<dbReference type="ProteomicsDB" id="61149">
    <molecule id="Q17RD7-2"/>
</dbReference>
<dbReference type="Antibodypedia" id="60">
    <property type="antibodies" value="129 antibodies from 22 providers"/>
</dbReference>
<dbReference type="DNASU" id="83851"/>
<dbReference type="Ensembl" id="ENST00000555409.1">
    <molecule id="Q17RD7-4"/>
    <property type="protein sequence ID" value="ENSP00000451035.1"/>
    <property type="gene ID" value="ENSG00000139973.18"/>
</dbReference>
<dbReference type="Ensembl" id="ENST00000568344.5">
    <molecule id="Q17RD7-1"/>
    <property type="protein sequence ID" value="ENSP00000478637.1"/>
    <property type="gene ID" value="ENSG00000139973.18"/>
</dbReference>
<dbReference type="Ensembl" id="ENST00000683842.1">
    <molecule id="Q17RD7-1"/>
    <property type="protein sequence ID" value="ENSP00000508274.1"/>
    <property type="gene ID" value="ENSG00000139973.18"/>
</dbReference>
<dbReference type="GeneID" id="83851"/>
<dbReference type="MANE-Select" id="ENST00000683842.1">
    <property type="protein sequence ID" value="ENSP00000508274.1"/>
    <property type="RefSeq nucleotide sequence ID" value="NM_001367656.1"/>
    <property type="RefSeq protein sequence ID" value="NP_001354585.1"/>
</dbReference>
<dbReference type="UCSC" id="uc001xfu.2">
    <molecule id="Q17RD7-1"/>
    <property type="organism name" value="human"/>
</dbReference>
<dbReference type="AGR" id="HGNC:23142"/>
<dbReference type="DisGeNET" id="83851"/>
<dbReference type="GeneCards" id="SYT16"/>
<dbReference type="HGNC" id="HGNC:23142">
    <property type="gene designation" value="SYT16"/>
</dbReference>
<dbReference type="HPA" id="ENSG00000139973">
    <property type="expression patterns" value="Tissue enhanced (brain, testis)"/>
</dbReference>
<dbReference type="MIM" id="610950">
    <property type="type" value="gene"/>
</dbReference>
<dbReference type="neXtProt" id="NX_Q17RD7"/>
<dbReference type="OpenTargets" id="ENSG00000139973"/>
<dbReference type="PharmGKB" id="PA134964250"/>
<dbReference type="VEuPathDB" id="HostDB:ENSG00000139973"/>
<dbReference type="eggNOG" id="KOG1028">
    <property type="taxonomic scope" value="Eukaryota"/>
</dbReference>
<dbReference type="GeneTree" id="ENSGT00940000159673"/>
<dbReference type="HOGENOM" id="CLU_023008_6_1_1"/>
<dbReference type="InParanoid" id="Q17RD7"/>
<dbReference type="OMA" id="CAIRFRL"/>
<dbReference type="OrthoDB" id="5978493at2759"/>
<dbReference type="PAN-GO" id="Q17RD7">
    <property type="GO annotations" value="1 GO annotation based on evolutionary models"/>
</dbReference>
<dbReference type="PhylomeDB" id="Q17RD7"/>
<dbReference type="TreeFam" id="TF351132"/>
<dbReference type="PathwayCommons" id="Q17RD7"/>
<dbReference type="SignaLink" id="Q17RD7"/>
<dbReference type="BioGRID-ORCS" id="83851">
    <property type="hits" value="7 hits in 1148 CRISPR screens"/>
</dbReference>
<dbReference type="ChiTaRS" id="SYT16">
    <property type="organism name" value="human"/>
</dbReference>
<dbReference type="GenomeRNAi" id="83851"/>
<dbReference type="Pharos" id="Q17RD7">
    <property type="development level" value="Tbio"/>
</dbReference>
<dbReference type="PRO" id="PR:Q17RD7"/>
<dbReference type="Proteomes" id="UP000005640">
    <property type="component" value="Chromosome 14"/>
</dbReference>
<dbReference type="RNAct" id="Q17RD7">
    <property type="molecule type" value="protein"/>
</dbReference>
<dbReference type="Bgee" id="ENSG00000139973">
    <property type="expression patterns" value="Expressed in Brodmann (1909) area 23 and 96 other cell types or tissues"/>
</dbReference>
<dbReference type="ExpressionAtlas" id="Q17RD7">
    <property type="expression patterns" value="baseline and differential"/>
</dbReference>
<dbReference type="GO" id="GO:0042802">
    <property type="term" value="F:identical protein binding"/>
    <property type="evidence" value="ECO:0007669"/>
    <property type="project" value="Ensembl"/>
</dbReference>
<dbReference type="GO" id="GO:0005543">
    <property type="term" value="F:phospholipid binding"/>
    <property type="evidence" value="ECO:0000318"/>
    <property type="project" value="GO_Central"/>
</dbReference>
<dbReference type="CDD" id="cd08389">
    <property type="entry name" value="C2A_Synaptotagmin-14_16"/>
    <property type="match status" value="1"/>
</dbReference>
<dbReference type="CDD" id="cd08408">
    <property type="entry name" value="C2B_Synaptotagmin-14_16"/>
    <property type="match status" value="1"/>
</dbReference>
<dbReference type="FunFam" id="2.60.40.150:FF:000153">
    <property type="entry name" value="Synaptotagmin 16"/>
    <property type="match status" value="1"/>
</dbReference>
<dbReference type="FunFam" id="2.60.40.150:FF:000062">
    <property type="entry name" value="synaptotagmin-14 isoform X1"/>
    <property type="match status" value="1"/>
</dbReference>
<dbReference type="Gene3D" id="2.60.40.150">
    <property type="entry name" value="C2 domain"/>
    <property type="match status" value="2"/>
</dbReference>
<dbReference type="InterPro" id="IPR000008">
    <property type="entry name" value="C2_dom"/>
</dbReference>
<dbReference type="InterPro" id="IPR035892">
    <property type="entry name" value="C2_domain_sf"/>
</dbReference>
<dbReference type="InterPro" id="IPR043541">
    <property type="entry name" value="SYT14/14L/16"/>
</dbReference>
<dbReference type="PANTHER" id="PTHR46129">
    <property type="entry name" value="SYNAPTOTAGMIN 14, ISOFORM D"/>
    <property type="match status" value="1"/>
</dbReference>
<dbReference type="PANTHER" id="PTHR46129:SF4">
    <property type="entry name" value="SYNAPTOTAGMIN-16"/>
    <property type="match status" value="1"/>
</dbReference>
<dbReference type="Pfam" id="PF00168">
    <property type="entry name" value="C2"/>
    <property type="match status" value="2"/>
</dbReference>
<dbReference type="SMART" id="SM00239">
    <property type="entry name" value="C2"/>
    <property type="match status" value="2"/>
</dbReference>
<dbReference type="SUPFAM" id="SSF49562">
    <property type="entry name" value="C2 domain (Calcium/lipid-binding domain, CaLB)"/>
    <property type="match status" value="2"/>
</dbReference>
<dbReference type="PROSITE" id="PS50004">
    <property type="entry name" value="C2"/>
    <property type="match status" value="2"/>
</dbReference>
<name>SYT16_HUMAN</name>
<evidence type="ECO:0000250" key="1"/>
<evidence type="ECO:0000255" key="2">
    <source>
        <dbReference type="PROSITE-ProRule" id="PRU00041"/>
    </source>
</evidence>
<evidence type="ECO:0000256" key="3">
    <source>
        <dbReference type="SAM" id="MobiDB-lite"/>
    </source>
</evidence>
<evidence type="ECO:0000269" key="4">
    <source>
    </source>
</evidence>
<evidence type="ECO:0000269" key="5">
    <source>
    </source>
</evidence>
<evidence type="ECO:0000269" key="6">
    <source>
    </source>
</evidence>
<evidence type="ECO:0000303" key="7">
    <source>
    </source>
</evidence>
<evidence type="ECO:0000303" key="8">
    <source>
    </source>
</evidence>
<evidence type="ECO:0000303" key="9">
    <source>
    </source>
</evidence>
<evidence type="ECO:0000305" key="10"/>
<protein>
    <recommendedName>
        <fullName>Synaptotagmin-16</fullName>
    </recommendedName>
    <alternativeName>
        <fullName>Chr14Syt</fullName>
    </alternativeName>
    <alternativeName>
        <fullName>Synaptotagmin 14-like protein</fullName>
    </alternativeName>
    <alternativeName>
        <fullName>Synaptotagmin XIV-related protein</fullName>
    </alternativeName>
</protein>
<keyword id="KW-0025">Alternative splicing</keyword>
<keyword id="KW-1267">Proteomics identification</keyword>
<keyword id="KW-1185">Reference proteome</keyword>
<keyword id="KW-0677">Repeat</keyword>